<name>TXLS2_PSETR</name>
<keyword id="KW-0903">Direct protein sequencing</keyword>
<keyword id="KW-1015">Disulfide bond</keyword>
<keyword id="KW-0964">Secreted</keyword>
<protein>
    <recommendedName>
        <fullName evidence="4">U1-pseudomyrmecitoxin-Pt1 subunit LS2</fullName>
        <shortName evidence="4">U1-PSDTX-Pt1 subunit LS2</shortName>
    </recommendedName>
    <alternativeName>
        <fullName evidence="2">Myrmexin I subunit LS2/Myrmexin III subunit LS2/Myrmexin IV subunit LS2</fullName>
    </alternativeName>
    <alternativeName>
        <fullName evidence="3">U1-pseudomyrmecitoxin-Pt1a subunit LS2/U1-pseudomyrmecitoxin-Pt1c subunit LS2/U1-pseudomyrmecitoxin-Pt1d subunit LS2</fullName>
        <shortName evidence="3">U1-PSDTX-Pt1a subunit LS2/U1-PSDTX-Pt1c subunit LS2/U1-PSDTX-Pt1d subunit LS2</shortName>
    </alternativeName>
</protein>
<organism>
    <name type="scientific">Pseudomyrmex triplarinus</name>
    <name type="common">Ant</name>
    <dbReference type="NCBI Taxonomy" id="600763"/>
    <lineage>
        <taxon>Eukaryota</taxon>
        <taxon>Metazoa</taxon>
        <taxon>Ecdysozoa</taxon>
        <taxon>Arthropoda</taxon>
        <taxon>Hexapoda</taxon>
        <taxon>Insecta</taxon>
        <taxon>Pterygota</taxon>
        <taxon>Neoptera</taxon>
        <taxon>Endopterygota</taxon>
        <taxon>Hymenoptera</taxon>
        <taxon>Apocrita</taxon>
        <taxon>Aculeata</taxon>
        <taxon>Formicoidea</taxon>
        <taxon>Formicidae</taxon>
        <taxon>Pseudomyrmecinae</taxon>
        <taxon>Pseudomyrmex</taxon>
    </lineage>
</organism>
<feature type="chain" id="PRO_0000447113" description="U1-pseudomyrmecitoxin-Pt1 subunit LS2">
    <location>
        <begin position="1"/>
        <end position="33"/>
    </location>
</feature>
<feature type="disulfide bond" description="Interchain (with C-17 in SS1 or SS2 or SS3)" evidence="4">
    <location>
        <position position="21"/>
    </location>
</feature>
<feature type="disulfide bond" description="Interchain (with C-26 in SS1 or SS2 or SS3)" evidence="4">
    <location>
        <position position="31"/>
    </location>
</feature>
<dbReference type="SMR" id="P0DSL8"/>
<dbReference type="GO" id="GO:0005576">
    <property type="term" value="C:extracellular region"/>
    <property type="evidence" value="ECO:0007669"/>
    <property type="project" value="UniProtKB-SubCell"/>
</dbReference>
<evidence type="ECO:0000269" key="1">
    <source>
    </source>
</evidence>
<evidence type="ECO:0000303" key="2">
    <source>
    </source>
</evidence>
<evidence type="ECO:0000303" key="3">
    <source>
    </source>
</evidence>
<evidence type="ECO:0000305" key="4"/>
<evidence type="ECO:0000305" key="5">
    <source>
    </source>
</evidence>
<reference key="1">
    <citation type="journal article" date="2000" name="Toxicon">
        <title>Isolation and characterization of myrmexins, six isoforms of venom proteins with anti-inflammatory activity from the tropical ant, Pseudomyrmex triplarinus.</title>
        <authorList>
            <person name="Pan J."/>
            <person name="Hink W.F."/>
        </authorList>
    </citation>
    <scope>PROTEIN SEQUENCE</scope>
    <scope>FUNCTION</scope>
    <scope>SUBCELLULAR LOCATION</scope>
    <scope>SUBUNIT</scope>
    <scope>IDENTIFICATION BY MASS SPECTROMETRY</scope>
    <source>
        <tissue>Venom</tissue>
    </source>
</reference>
<reference key="2">
    <citation type="journal article" date="2016" name="Toxins">
        <title>The biochemical toxin arsenal from ant venoms.</title>
        <authorList>
            <person name="Touchard A."/>
            <person name="Aili S.R."/>
            <person name="Fox E.G."/>
            <person name="Escoubas P."/>
            <person name="Orivel J."/>
            <person name="Nicholson G.M."/>
            <person name="Dejean A."/>
        </authorList>
    </citation>
    <scope>REVIEW</scope>
    <scope>NOMENCLATURE</scope>
</reference>
<accession>P0DSL8</accession>
<proteinExistence type="evidence at protein level"/>
<comment type="function">
    <text evidence="1">This heterodimer may have anti-inflammatory properties, since the myrmexin complex (composed of 6 SS-LS heterodimers) inhibits carrageenin-induced edema in a dose-dependent manner (after subcutaneous injection into rats).</text>
</comment>
<comment type="subunit">
    <text evidence="1">Heterodimer composed of subunit LS2 and subunit SS1, heterodimer composed of subunit LS2 and SS2, and heterodimer composed of subunit LS2 and SS3; disulfide-linked.</text>
</comment>
<comment type="subcellular location">
    <subcellularLocation>
        <location evidence="1">Secreted</location>
    </subcellularLocation>
</comment>
<comment type="tissue specificity">
    <text evidence="5">Expressed by the venom gland.</text>
</comment>
<comment type="miscellaneous">
    <text evidence="5">There are 6 heterodimeric myrmexins which consist of a small subunit (SS1 or SS2 or SS3) disulfide-linked to a larger, quite structurally unrelated subunit (LS1 or LS2).</text>
</comment>
<comment type="miscellaneous">
    <text evidence="1">MALDI experiments give a mass of 7069 Da for U1-PSDTX-Pt1a heterodimer (SS1+LS2).</text>
</comment>
<comment type="miscellaneous">
    <text evidence="1">MALDI experiments give a mass of 7090 Da for U1-PSDTX-Pt1c heterodimer (SS2+LS2).</text>
</comment>
<comment type="miscellaneous">
    <text evidence="1">MALDI experiments give a mass of 7143 Da for U1-PSDTX-Pt1d heterodimer (SS3+LS2).</text>
</comment>
<comment type="similarity">
    <text evidence="4">Belongs to the myrmexin family.</text>
</comment>
<sequence>ISLAQIKKLLQIIKQGLKAICDNRDLIAKGCQA</sequence>